<name>CARD6_HUMAN</name>
<comment type="function">
    <text>May be involved in apoptosis.</text>
</comment>
<comment type="interaction">
    <interactant intactId="EBI-14405242">
        <id>Q9BX69</id>
    </interactant>
    <interactant intactId="EBI-358522">
        <id>O43353</id>
        <label>RIPK2</label>
    </interactant>
    <organismsDiffer>false</organismsDiffer>
    <experiments>2</experiments>
</comment>
<feature type="initiator methionine" description="Removed" evidence="4">
    <location>
        <position position="1"/>
    </location>
</feature>
<feature type="chain" id="PRO_0000144079" description="Caspase recruitment domain-containing protein 6">
    <location>
        <begin position="2"/>
        <end position="1037"/>
    </location>
</feature>
<feature type="domain" description="CARD" evidence="1">
    <location>
        <begin position="3"/>
        <end position="94"/>
    </location>
</feature>
<feature type="region of interest" description="Disordered" evidence="2">
    <location>
        <begin position="235"/>
        <end position="270"/>
    </location>
</feature>
<feature type="region of interest" description="Disordered" evidence="2">
    <location>
        <begin position="669"/>
        <end position="704"/>
    </location>
</feature>
<feature type="region of interest" description="Disordered" evidence="2">
    <location>
        <begin position="887"/>
        <end position="1037"/>
    </location>
</feature>
<feature type="compositionally biased region" description="Acidic residues" evidence="2">
    <location>
        <begin position="242"/>
        <end position="261"/>
    </location>
</feature>
<feature type="compositionally biased region" description="Low complexity" evidence="2">
    <location>
        <begin position="690"/>
        <end position="699"/>
    </location>
</feature>
<feature type="compositionally biased region" description="Polar residues" evidence="2">
    <location>
        <begin position="911"/>
        <end position="928"/>
    </location>
</feature>
<feature type="compositionally biased region" description="Polar residues" evidence="2">
    <location>
        <begin position="938"/>
        <end position="954"/>
    </location>
</feature>
<feature type="compositionally biased region" description="Polar residues" evidence="2">
    <location>
        <begin position="963"/>
        <end position="984"/>
    </location>
</feature>
<feature type="compositionally biased region" description="Pro residues" evidence="2">
    <location>
        <begin position="994"/>
        <end position="1012"/>
    </location>
</feature>
<feature type="compositionally biased region" description="Basic residues" evidence="2">
    <location>
        <begin position="1023"/>
        <end position="1037"/>
    </location>
</feature>
<feature type="modified residue" description="N-acetylalanine" evidence="4">
    <location>
        <position position="2"/>
    </location>
</feature>
<feature type="modified residue" description="Phosphoserine" evidence="5">
    <location>
        <position position="154"/>
    </location>
</feature>
<feature type="modified residue" description="Phosphoserine" evidence="5">
    <location>
        <position position="985"/>
    </location>
</feature>
<feature type="sequence variant" id="VAR_046689" description="In dbSNP:rs10512747." evidence="3">
    <original>S</original>
    <variation>L</variation>
    <location>
        <position position="86"/>
    </location>
</feature>
<feature type="sequence variant" id="VAR_046690" description="In dbSNP:rs7715491.">
    <original>R</original>
    <variation>K</variation>
    <location>
        <position position="93"/>
    </location>
</feature>
<feature type="sequence variant" id="VAR_046691" description="In dbSNP:rs3812030.">
    <original>M</original>
    <variation>K</variation>
    <location>
        <position position="395"/>
    </location>
</feature>
<feature type="sequence variant" id="VAR_046692" description="In dbSNP:rs3812031.">
    <original>D</original>
    <variation>V</variation>
    <location>
        <position position="426"/>
    </location>
</feature>
<feature type="sequence variant" id="VAR_046693" description="In dbSNP:rs36085996.">
    <original>A</original>
    <variation>D</variation>
    <location>
        <position position="575"/>
    </location>
</feature>
<feature type="sequence variant" id="VAR_046694" description="In dbSNP:rs323562.">
    <original>I</original>
    <variation>V</variation>
    <location>
        <position position="576"/>
    </location>
</feature>
<protein>
    <recommendedName>
        <fullName>Caspase recruitment domain-containing protein 6</fullName>
    </recommendedName>
</protein>
<dbReference type="EMBL" id="AF356193">
    <property type="protein sequence ID" value="AAK32718.1"/>
    <property type="molecule type" value="mRNA"/>
</dbReference>
<dbReference type="EMBL" id="CH471119">
    <property type="protein sequence ID" value="EAW56006.1"/>
    <property type="molecule type" value="Genomic_DNA"/>
</dbReference>
<dbReference type="EMBL" id="BC093825">
    <property type="protein sequence ID" value="AAH93825.1"/>
    <property type="molecule type" value="mRNA"/>
</dbReference>
<dbReference type="CCDS" id="CCDS3935.1"/>
<dbReference type="RefSeq" id="NP_115976.2">
    <property type="nucleotide sequence ID" value="NM_032587.3"/>
</dbReference>
<dbReference type="SMR" id="Q9BX69"/>
<dbReference type="BioGRID" id="124193">
    <property type="interactions" value="10"/>
</dbReference>
<dbReference type="DIP" id="DIP-61097N"/>
<dbReference type="FunCoup" id="Q9BX69">
    <property type="interactions" value="199"/>
</dbReference>
<dbReference type="IntAct" id="Q9BX69">
    <property type="interactions" value="4"/>
</dbReference>
<dbReference type="STRING" id="9606.ENSP00000254691"/>
<dbReference type="GlyGen" id="Q9BX69">
    <property type="glycosylation" value="3 sites, 1 O-linked glycan (1 site)"/>
</dbReference>
<dbReference type="iPTMnet" id="Q9BX69"/>
<dbReference type="PhosphoSitePlus" id="Q9BX69"/>
<dbReference type="BioMuta" id="CARD6"/>
<dbReference type="DMDM" id="209572595"/>
<dbReference type="jPOST" id="Q9BX69"/>
<dbReference type="MassIVE" id="Q9BX69"/>
<dbReference type="PaxDb" id="9606-ENSP00000254691"/>
<dbReference type="PeptideAtlas" id="Q9BX69"/>
<dbReference type="ProteomicsDB" id="79369"/>
<dbReference type="Pumba" id="Q9BX69"/>
<dbReference type="Antibodypedia" id="23154">
    <property type="antibodies" value="311 antibodies from 35 providers"/>
</dbReference>
<dbReference type="DNASU" id="84674"/>
<dbReference type="Ensembl" id="ENST00000254691.10">
    <property type="protein sequence ID" value="ENSP00000254691.5"/>
    <property type="gene ID" value="ENSG00000132357.14"/>
</dbReference>
<dbReference type="GeneID" id="84674"/>
<dbReference type="KEGG" id="hsa:84674"/>
<dbReference type="MANE-Select" id="ENST00000254691.10">
    <property type="protein sequence ID" value="ENSP00000254691.5"/>
    <property type="RefSeq nucleotide sequence ID" value="NM_032587.4"/>
    <property type="RefSeq protein sequence ID" value="NP_115976.2"/>
</dbReference>
<dbReference type="UCSC" id="uc003jmg.4">
    <property type="organism name" value="human"/>
</dbReference>
<dbReference type="AGR" id="HGNC:16394"/>
<dbReference type="CTD" id="84674"/>
<dbReference type="DisGeNET" id="84674"/>
<dbReference type="GeneCards" id="CARD6"/>
<dbReference type="HGNC" id="HGNC:16394">
    <property type="gene designation" value="CARD6"/>
</dbReference>
<dbReference type="HPA" id="ENSG00000132357">
    <property type="expression patterns" value="Low tissue specificity"/>
</dbReference>
<dbReference type="MIM" id="609986">
    <property type="type" value="gene"/>
</dbReference>
<dbReference type="neXtProt" id="NX_Q9BX69"/>
<dbReference type="OpenTargets" id="ENSG00000132357"/>
<dbReference type="PharmGKB" id="PA26076"/>
<dbReference type="VEuPathDB" id="HostDB:ENSG00000132357"/>
<dbReference type="eggNOG" id="ENOG502SDCX">
    <property type="taxonomic scope" value="Eukaryota"/>
</dbReference>
<dbReference type="GeneTree" id="ENSGT00940000162106"/>
<dbReference type="HOGENOM" id="CLU_008197_0_0_1"/>
<dbReference type="InParanoid" id="Q9BX69"/>
<dbReference type="OMA" id="SLKAPWV"/>
<dbReference type="OrthoDB" id="9449373at2759"/>
<dbReference type="PAN-GO" id="Q9BX69">
    <property type="GO annotations" value="0 GO annotations based on evolutionary models"/>
</dbReference>
<dbReference type="PhylomeDB" id="Q9BX69"/>
<dbReference type="TreeFam" id="TF335271"/>
<dbReference type="PathwayCommons" id="Q9BX69"/>
<dbReference type="SignaLink" id="Q9BX69"/>
<dbReference type="BioGRID-ORCS" id="84674">
    <property type="hits" value="12 hits in 1154 CRISPR screens"/>
</dbReference>
<dbReference type="ChiTaRS" id="CARD6">
    <property type="organism name" value="human"/>
</dbReference>
<dbReference type="GenomeRNAi" id="84674"/>
<dbReference type="Pharos" id="Q9BX69">
    <property type="development level" value="Tbio"/>
</dbReference>
<dbReference type="PRO" id="PR:Q9BX69"/>
<dbReference type="Proteomes" id="UP000005640">
    <property type="component" value="Chromosome 5"/>
</dbReference>
<dbReference type="RNAct" id="Q9BX69">
    <property type="molecule type" value="protein"/>
</dbReference>
<dbReference type="Bgee" id="ENSG00000132357">
    <property type="expression patterns" value="Expressed in epithelial cell of pancreas and 169 other cell types or tissues"/>
</dbReference>
<dbReference type="ExpressionAtlas" id="Q9BX69">
    <property type="expression patterns" value="baseline and differential"/>
</dbReference>
<dbReference type="GO" id="GO:0006915">
    <property type="term" value="P:apoptotic process"/>
    <property type="evidence" value="ECO:0007669"/>
    <property type="project" value="UniProtKB-KW"/>
</dbReference>
<dbReference type="GO" id="GO:0042981">
    <property type="term" value="P:regulation of apoptotic process"/>
    <property type="evidence" value="ECO:0007669"/>
    <property type="project" value="InterPro"/>
</dbReference>
<dbReference type="CDD" id="cd01671">
    <property type="entry name" value="CARD"/>
    <property type="match status" value="1"/>
</dbReference>
<dbReference type="Gene3D" id="1.10.533.10">
    <property type="entry name" value="Death Domain, Fas"/>
    <property type="match status" value="1"/>
</dbReference>
<dbReference type="InterPro" id="IPR052685">
    <property type="entry name" value="Apoptosis_Repressor_CARD"/>
</dbReference>
<dbReference type="InterPro" id="IPR001315">
    <property type="entry name" value="CARD"/>
</dbReference>
<dbReference type="InterPro" id="IPR011029">
    <property type="entry name" value="DEATH-like_dom_sf"/>
</dbReference>
<dbReference type="PANTHER" id="PTHR22797">
    <property type="entry name" value="CARD6/NUCLEOLAR PROTEIN 3"/>
    <property type="match status" value="1"/>
</dbReference>
<dbReference type="PANTHER" id="PTHR22797:SF36">
    <property type="entry name" value="CASPASE RECRUITMENT DOMAIN-CONTAINING PROTEIN 6"/>
    <property type="match status" value="1"/>
</dbReference>
<dbReference type="Pfam" id="PF00619">
    <property type="entry name" value="CARD"/>
    <property type="match status" value="1"/>
</dbReference>
<dbReference type="Pfam" id="PF25496">
    <property type="entry name" value="URGCP"/>
    <property type="match status" value="1"/>
</dbReference>
<dbReference type="SMART" id="SM00114">
    <property type="entry name" value="CARD"/>
    <property type="match status" value="1"/>
</dbReference>
<dbReference type="SUPFAM" id="SSF47986">
    <property type="entry name" value="DEATH domain"/>
    <property type="match status" value="1"/>
</dbReference>
<dbReference type="PROSITE" id="PS50209">
    <property type="entry name" value="CARD"/>
    <property type="match status" value="1"/>
</dbReference>
<gene>
    <name type="primary">CARD6</name>
</gene>
<proteinExistence type="evidence at protein level"/>
<evidence type="ECO:0000255" key="1">
    <source>
        <dbReference type="PROSITE-ProRule" id="PRU00046"/>
    </source>
</evidence>
<evidence type="ECO:0000256" key="2">
    <source>
        <dbReference type="SAM" id="MobiDB-lite"/>
    </source>
</evidence>
<evidence type="ECO:0000269" key="3">
    <source ref="1"/>
</evidence>
<evidence type="ECO:0007744" key="4">
    <source>
    </source>
</evidence>
<evidence type="ECO:0007744" key="5">
    <source>
    </source>
</evidence>
<sequence>MATESTPSEIIERERKKLLEILQHDPDSILDTLTSRRLISEEEYETLENVTDLLKKSRKLLILVQKKGEATCQHFLKCLFSTFPQSAAICGLRHEVLKHENTVPPQSMGASSNSEDAFSPGIKQPEAPEITVFFSEKEHLDLETSEFFRDKKTSYRETALSARKNEKEYDTPEVTLSYSVEKVGCEVPATITYIKDGQRYEELDDSLYLGKEEYLGSVDTPEDAEATVEEEVYDDPEHVGYDGEEDFENSETTEFSGEEPSYEGSETSLSLEEEQEKSIEERKKVFKDVLLCLNMDRSRKVLPDFVKQFSLDRGCKWTPESPGDLAWNFLMKVQARDVTARDSILSHKVLDEDSKEDLLAGVENLEIRDIQTINPLDVLCATMLCSDSSLQRQVMSNMYQCQFALPLLLPDAENNKSILMLGAMKDIVKKQSTQFSGGPTEDTEKFLTLMKMPVISFVRLGYCSFSKSRILNTLLSPAQLKLHKIFLHQDLPLLVLPRQISDGLVEITWCFPDSDDRKENPFFQKPVALANLRGNLESFWTQFGFLMEVSSAVFFFTDCLGEKEWDLLMFLGEAAIERCYFVLSSQARESEEAQIFQRILNLKPAQLLFWERGDAGDRRKNMEGLQAALQEVMFSSCLRCVSVEDMAALARELGIQVDEDFENTQRIQVSSGENMAGTAEGEGQQRHSQLKSSSKSQALMPIQEPGTQCELSQNLQNLYGTPVFRPVLENSWLFPTRIGGNFNHVSLKASWVMGRPFGSEQRPKWFHPLPFQNAGAQGRGKSFGIQSFHPQIFYSGERFMKFSRVARGCHSNGTFGRLPRPICQHVQACPERPQMMGTLERSRAVASKIGHSYSLDSQPARAVGKPWPQQACTRVTELTEATGKLIRTSHIGKPHPQSFQPAAATQKLRPASQQGVQMKTQGGASNPALQIGSHPMCKSSQFKSDQSNPSTVKHSQPKPFHSVPSQPKSSQTKSCQSQPSQTKPSPCKSTQPKPSQPWPPQSKPSQPRPPQPKSSSTNPSQAKAHHSKAGQKRGGKH</sequence>
<accession>Q9BX69</accession>
<accession>Q52LR2</accession>
<organism>
    <name type="scientific">Homo sapiens</name>
    <name type="common">Human</name>
    <dbReference type="NCBI Taxonomy" id="9606"/>
    <lineage>
        <taxon>Eukaryota</taxon>
        <taxon>Metazoa</taxon>
        <taxon>Chordata</taxon>
        <taxon>Craniata</taxon>
        <taxon>Vertebrata</taxon>
        <taxon>Euteleostomi</taxon>
        <taxon>Mammalia</taxon>
        <taxon>Eutheria</taxon>
        <taxon>Euarchontoglires</taxon>
        <taxon>Primates</taxon>
        <taxon>Haplorrhini</taxon>
        <taxon>Catarrhini</taxon>
        <taxon>Hominidae</taxon>
        <taxon>Homo</taxon>
    </lineage>
</organism>
<reference key="1">
    <citation type="submission" date="2001-03" db="EMBL/GenBank/DDBJ databases">
        <title>CARD6: a novel caspase recruitment domain (CARD) protein that regulates apoptosis.</title>
        <authorList>
            <person name="Bertin J."/>
        </authorList>
    </citation>
    <scope>NUCLEOTIDE SEQUENCE [MRNA]</scope>
    <scope>VARIANT LEU-86</scope>
</reference>
<reference key="2">
    <citation type="submission" date="2005-07" db="EMBL/GenBank/DDBJ databases">
        <authorList>
            <person name="Mural R.J."/>
            <person name="Istrail S."/>
            <person name="Sutton G.G."/>
            <person name="Florea L."/>
            <person name="Halpern A.L."/>
            <person name="Mobarry C.M."/>
            <person name="Lippert R."/>
            <person name="Walenz B."/>
            <person name="Shatkay H."/>
            <person name="Dew I."/>
            <person name="Miller J.R."/>
            <person name="Flanigan M.J."/>
            <person name="Edwards N.J."/>
            <person name="Bolanos R."/>
            <person name="Fasulo D."/>
            <person name="Halldorsson B.V."/>
            <person name="Hannenhalli S."/>
            <person name="Turner R."/>
            <person name="Yooseph S."/>
            <person name="Lu F."/>
            <person name="Nusskern D.R."/>
            <person name="Shue B.C."/>
            <person name="Zheng X.H."/>
            <person name="Zhong F."/>
            <person name="Delcher A.L."/>
            <person name="Huson D.H."/>
            <person name="Kravitz S.A."/>
            <person name="Mouchard L."/>
            <person name="Reinert K."/>
            <person name="Remington K.A."/>
            <person name="Clark A.G."/>
            <person name="Waterman M.S."/>
            <person name="Eichler E.E."/>
            <person name="Adams M.D."/>
            <person name="Hunkapiller M.W."/>
            <person name="Myers E.W."/>
            <person name="Venter J.C."/>
        </authorList>
    </citation>
    <scope>NUCLEOTIDE SEQUENCE [LARGE SCALE GENOMIC DNA]</scope>
</reference>
<reference key="3">
    <citation type="journal article" date="2004" name="Genome Res.">
        <title>The status, quality, and expansion of the NIH full-length cDNA project: the Mammalian Gene Collection (MGC).</title>
        <authorList>
            <consortium name="The MGC Project Team"/>
        </authorList>
    </citation>
    <scope>NUCLEOTIDE SEQUENCE [LARGE SCALE MRNA]</scope>
    <source>
        <tissue>Colon</tissue>
    </source>
</reference>
<reference key="4">
    <citation type="journal article" date="2012" name="Proc. Natl. Acad. Sci. U.S.A.">
        <title>N-terminal acetylome analyses and functional insights of the N-terminal acetyltransferase NatB.</title>
        <authorList>
            <person name="Van Damme P."/>
            <person name="Lasa M."/>
            <person name="Polevoda B."/>
            <person name="Gazquez C."/>
            <person name="Elosegui-Artola A."/>
            <person name="Kim D.S."/>
            <person name="De Juan-Pardo E."/>
            <person name="Demeyer K."/>
            <person name="Hole K."/>
            <person name="Larrea E."/>
            <person name="Timmerman E."/>
            <person name="Prieto J."/>
            <person name="Arnesen T."/>
            <person name="Sherman F."/>
            <person name="Gevaert K."/>
            <person name="Aldabe R."/>
        </authorList>
    </citation>
    <scope>ACETYLATION [LARGE SCALE ANALYSIS] AT ALA-2</scope>
    <scope>CLEAVAGE OF INITIATOR METHIONINE [LARGE SCALE ANALYSIS]</scope>
    <scope>IDENTIFICATION BY MASS SPECTROMETRY [LARGE SCALE ANALYSIS]</scope>
</reference>
<reference key="5">
    <citation type="journal article" date="2013" name="J. Proteome Res.">
        <title>Toward a comprehensive characterization of a human cancer cell phosphoproteome.</title>
        <authorList>
            <person name="Zhou H."/>
            <person name="Di Palma S."/>
            <person name="Preisinger C."/>
            <person name="Peng M."/>
            <person name="Polat A.N."/>
            <person name="Heck A.J."/>
            <person name="Mohammed S."/>
        </authorList>
    </citation>
    <scope>PHOSPHORYLATION [LARGE SCALE ANALYSIS] AT SER-154 AND SER-985</scope>
    <scope>IDENTIFICATION BY MASS SPECTROMETRY [LARGE SCALE ANALYSIS]</scope>
    <source>
        <tissue>Cervix carcinoma</tissue>
        <tissue>Erythroleukemia</tissue>
    </source>
</reference>
<keyword id="KW-0007">Acetylation</keyword>
<keyword id="KW-0053">Apoptosis</keyword>
<keyword id="KW-0597">Phosphoprotein</keyword>
<keyword id="KW-1267">Proteomics identification</keyword>
<keyword id="KW-1185">Reference proteome</keyword>